<sequence length="268" mass="31364">MAGELRIMENKSREDINLSPVSKIEIYSFFDPFSSDCFKLSAILSKLRIEYNQYIRIRHILNPSLKVLTKCQAQSTSNFDNIALAYKAAELQGRVRAERFIHLMQNEIIPKRDIITESMICDCIQNAGIDLEVFKDDLQKSKLTESLKIDLHIAREMEIEQAPSLVFFSEDVHEEGLKVEGLYPYHIYTYIINELMGKPIEKNLPPKLETYIQQQQLVTMEELLTIYEWPEKLLNKELKKLAIQQKIEKLKYPDGDFWKSKMPKIKSK</sequence>
<organism>
    <name type="scientific">Staphylococcus aureus (strain MSSA476)</name>
    <dbReference type="NCBI Taxonomy" id="282459"/>
    <lineage>
        <taxon>Bacteria</taxon>
        <taxon>Bacillati</taxon>
        <taxon>Bacillota</taxon>
        <taxon>Bacilli</taxon>
        <taxon>Bacillales</taxon>
        <taxon>Staphylococcaceae</taxon>
        <taxon>Staphylococcus</taxon>
    </lineage>
</organism>
<feature type="chain" id="PRO_0000278695" description="ClpXP adapter protein SpxH">
    <location>
        <begin position="1"/>
        <end position="268"/>
    </location>
</feature>
<proteinExistence type="inferred from homology"/>
<name>SPXH_STAAS</name>
<gene>
    <name evidence="1" type="primary">spxH</name>
    <name type="ordered locus">SAS0871</name>
</gene>
<evidence type="ECO:0000255" key="1">
    <source>
        <dbReference type="HAMAP-Rule" id="MF_02245"/>
    </source>
</evidence>
<reference key="1">
    <citation type="journal article" date="2004" name="Proc. Natl. Acad. Sci. U.S.A.">
        <title>Complete genomes of two clinical Staphylococcus aureus strains: evidence for the rapid evolution of virulence and drug resistance.</title>
        <authorList>
            <person name="Holden M.T.G."/>
            <person name="Feil E.J."/>
            <person name="Lindsay J.A."/>
            <person name="Peacock S.J."/>
            <person name="Day N.P.J."/>
            <person name="Enright M.C."/>
            <person name="Foster T.J."/>
            <person name="Moore C.E."/>
            <person name="Hurst L."/>
            <person name="Atkin R."/>
            <person name="Barron A."/>
            <person name="Bason N."/>
            <person name="Bentley S.D."/>
            <person name="Chillingworth C."/>
            <person name="Chillingworth T."/>
            <person name="Churcher C."/>
            <person name="Clark L."/>
            <person name="Corton C."/>
            <person name="Cronin A."/>
            <person name="Doggett J."/>
            <person name="Dowd L."/>
            <person name="Feltwell T."/>
            <person name="Hance Z."/>
            <person name="Harris B."/>
            <person name="Hauser H."/>
            <person name="Holroyd S."/>
            <person name="Jagels K."/>
            <person name="James K.D."/>
            <person name="Lennard N."/>
            <person name="Line A."/>
            <person name="Mayes R."/>
            <person name="Moule S."/>
            <person name="Mungall K."/>
            <person name="Ormond D."/>
            <person name="Quail M.A."/>
            <person name="Rabbinowitsch E."/>
            <person name="Rutherford K.M."/>
            <person name="Sanders M."/>
            <person name="Sharp S."/>
            <person name="Simmonds M."/>
            <person name="Stevens K."/>
            <person name="Whitehead S."/>
            <person name="Barrell B.G."/>
            <person name="Spratt B.G."/>
            <person name="Parkhill J."/>
        </authorList>
    </citation>
    <scope>NUCLEOTIDE SEQUENCE [LARGE SCALE GENOMIC DNA]</scope>
    <source>
        <strain>MSSA476</strain>
    </source>
</reference>
<accession>Q6GAS5</accession>
<dbReference type="EMBL" id="BX571857">
    <property type="protein sequence ID" value="CAG42646.1"/>
    <property type="molecule type" value="Genomic_DNA"/>
</dbReference>
<dbReference type="SMR" id="Q6GAS5"/>
<dbReference type="KEGG" id="sas:SAS0871"/>
<dbReference type="HOGENOM" id="CLU_069785_0_0_9"/>
<dbReference type="GO" id="GO:0005737">
    <property type="term" value="C:cytoplasm"/>
    <property type="evidence" value="ECO:0007669"/>
    <property type="project" value="UniProtKB-SubCell"/>
</dbReference>
<dbReference type="Gene3D" id="3.40.30.10">
    <property type="entry name" value="Glutaredoxin"/>
    <property type="match status" value="1"/>
</dbReference>
<dbReference type="HAMAP" id="MF_02245">
    <property type="entry name" value="Adapter_SpxH"/>
    <property type="match status" value="1"/>
</dbReference>
<dbReference type="InterPro" id="IPR046404">
    <property type="entry name" value="Adapter_SpxH"/>
</dbReference>
<dbReference type="InterPro" id="IPR036249">
    <property type="entry name" value="Thioredoxin-like_sf"/>
</dbReference>
<dbReference type="PANTHER" id="PTHR13887:SF47">
    <property type="entry name" value="CLPXP ADAPTER PROTEIN SPXH"/>
    <property type="match status" value="1"/>
</dbReference>
<dbReference type="PANTHER" id="PTHR13887">
    <property type="entry name" value="GLUTATHIONE S-TRANSFERASE KAPPA"/>
    <property type="match status" value="1"/>
</dbReference>
<dbReference type="Pfam" id="PF13743">
    <property type="entry name" value="Thioredoxin_5"/>
    <property type="match status" value="1"/>
</dbReference>
<dbReference type="SUPFAM" id="SSF52833">
    <property type="entry name" value="Thioredoxin-like"/>
    <property type="match status" value="1"/>
</dbReference>
<comment type="function">
    <text evidence="1">Adapter protein required for efficient degradation of Spx by ClpXP under non-stress conditions. Interaction with Spx stabilizes Spx and exposes the C-terminus of Spx for recognition and proteolysis by ClpXP.</text>
</comment>
<comment type="subunit">
    <text evidence="1">Interacts with Spx.</text>
</comment>
<comment type="subcellular location">
    <subcellularLocation>
        <location evidence="1">Cytoplasm</location>
    </subcellularLocation>
</comment>
<comment type="similarity">
    <text evidence="1">Belongs to the SpxH family.</text>
</comment>
<protein>
    <recommendedName>
        <fullName evidence="1">ClpXP adapter protein SpxH</fullName>
    </recommendedName>
</protein>
<keyword id="KW-0963">Cytoplasm</keyword>